<keyword id="KW-0903">Direct protein sequencing</keyword>
<keyword id="KW-1015">Disulfide bond</keyword>
<keyword id="KW-0813">Transport</keyword>
<evidence type="ECO:0000250" key="1">
    <source>
        <dbReference type="UniProtKB" id="P02752"/>
    </source>
</evidence>
<evidence type="ECO:0000255" key="2"/>
<evidence type="ECO:0000305" key="3"/>
<organism>
    <name type="scientific">Struthio camelus</name>
    <name type="common">Common ostrich</name>
    <dbReference type="NCBI Taxonomy" id="8801"/>
    <lineage>
        <taxon>Eukaryota</taxon>
        <taxon>Metazoa</taxon>
        <taxon>Chordata</taxon>
        <taxon>Craniata</taxon>
        <taxon>Vertebrata</taxon>
        <taxon>Euteleostomi</taxon>
        <taxon>Archelosauria</taxon>
        <taxon>Archosauria</taxon>
        <taxon>Dinosauria</taxon>
        <taxon>Saurischia</taxon>
        <taxon>Theropoda</taxon>
        <taxon>Coelurosauria</taxon>
        <taxon>Aves</taxon>
        <taxon>Palaeognathae</taxon>
        <taxon>Struthioniformes</taxon>
        <taxon>Struthionidae</taxon>
        <taxon>Struthio</taxon>
    </lineage>
</organism>
<comment type="function">
    <text evidence="1">Required for the transport of riboflavin to the developing oocyte.</text>
</comment>
<comment type="similarity">
    <text evidence="2">Belongs to the folate receptor family.</text>
</comment>
<sequence>KKYSCLEGETHKLKPSPEPNMQECTLYSGSSCCYA</sequence>
<feature type="chain" id="PRO_0000347259" description="Riboflavin-binding protein">
    <location>
        <begin position="1"/>
        <end position="35" status="greater than"/>
    </location>
</feature>
<feature type="disulfide bond" description="Or C-5 with C-33" evidence="1">
    <location>
        <begin position="5"/>
        <end position="32"/>
    </location>
</feature>
<feature type="disulfide bond" evidence="1">
    <location>
        <begin position="24"/>
        <end status="unknown"/>
    </location>
</feature>
<feature type="disulfide bond" description="Or C-32 with C-?" evidence="1">
    <location>
        <begin position="33"/>
        <end status="unknown"/>
    </location>
</feature>
<feature type="non-terminal residue">
    <location>
        <position position="35"/>
    </location>
</feature>
<accession>P85896</accession>
<reference evidence="3" key="1">
    <citation type="submission" date="2008-06" db="UniProtKB">
        <authorList>
            <person name="Maehashi K."/>
            <person name="Matano M."/>
            <person name="Uchino M."/>
            <person name="Yamamoto Y."/>
        </authorList>
    </citation>
    <scope>PROTEIN SEQUENCE</scope>
    <source>
        <tissue>Egg white</tissue>
        <tissue>Egg yolk</tissue>
    </source>
</reference>
<name>RBP_STRCA</name>
<protein>
    <recommendedName>
        <fullName>Riboflavin-binding protein</fullName>
        <shortName evidence="1">RBP</shortName>
    </recommendedName>
</protein>
<proteinExistence type="evidence at protein level"/>
<dbReference type="SMR" id="P85896"/>